<accession>P0A978</accession>
<accession>Q47130</accession>
<evidence type="ECO:0000250" key="1"/>
<dbReference type="EMBL" id="D63344">
    <property type="protein sequence ID" value="BAA09669.1"/>
    <property type="molecule type" value="mRNA"/>
</dbReference>
<dbReference type="EMBL" id="AF003591">
    <property type="protein sequence ID" value="AAB61741.1"/>
    <property type="molecule type" value="Genomic_DNA"/>
</dbReference>
<dbReference type="EMBL" id="U00096">
    <property type="protein sequence ID" value="AAC74075.1"/>
    <property type="molecule type" value="Genomic_DNA"/>
</dbReference>
<dbReference type="EMBL" id="AP009048">
    <property type="protein sequence ID" value="BAA35756.1"/>
    <property type="molecule type" value="Genomic_DNA"/>
</dbReference>
<dbReference type="PIR" id="D64840">
    <property type="entry name" value="D64840"/>
</dbReference>
<dbReference type="RefSeq" id="NP_415510.1">
    <property type="nucleotide sequence ID" value="NC_000913.3"/>
</dbReference>
<dbReference type="RefSeq" id="WP_000066490.1">
    <property type="nucleotide sequence ID" value="NZ_STEB01000006.1"/>
</dbReference>
<dbReference type="SMR" id="P0A978"/>
<dbReference type="BioGRID" id="4260917">
    <property type="interactions" value="128"/>
</dbReference>
<dbReference type="DIP" id="DIP-47938N"/>
<dbReference type="FunCoup" id="P0A978">
    <property type="interactions" value="368"/>
</dbReference>
<dbReference type="IntAct" id="P0A978">
    <property type="interactions" value="23"/>
</dbReference>
<dbReference type="STRING" id="511145.b0990"/>
<dbReference type="jPOST" id="P0A978"/>
<dbReference type="PaxDb" id="511145-b0990"/>
<dbReference type="EnsemblBacteria" id="AAC74075">
    <property type="protein sequence ID" value="AAC74075"/>
    <property type="gene ID" value="b0990"/>
</dbReference>
<dbReference type="GeneID" id="93776422"/>
<dbReference type="GeneID" id="945591"/>
<dbReference type="KEGG" id="ecj:JW0974"/>
<dbReference type="KEGG" id="eco:b0990"/>
<dbReference type="KEGG" id="ecoc:C3026_06035"/>
<dbReference type="PATRIC" id="fig|1411691.4.peg.1282"/>
<dbReference type="EchoBASE" id="EB3993"/>
<dbReference type="eggNOG" id="COG1278">
    <property type="taxonomic scope" value="Bacteria"/>
</dbReference>
<dbReference type="HOGENOM" id="CLU_117621_2_1_6"/>
<dbReference type="InParanoid" id="P0A978"/>
<dbReference type="OMA" id="DGQKVQF"/>
<dbReference type="OrthoDB" id="9810590at2"/>
<dbReference type="PhylomeDB" id="P0A978"/>
<dbReference type="BioCyc" id="EcoCyc:G6511-MONOMER"/>
<dbReference type="PRO" id="PR:P0A978"/>
<dbReference type="Proteomes" id="UP000000625">
    <property type="component" value="Chromosome"/>
</dbReference>
<dbReference type="GO" id="GO:0005829">
    <property type="term" value="C:cytosol"/>
    <property type="evidence" value="ECO:0000314"/>
    <property type="project" value="EcoCyc"/>
</dbReference>
<dbReference type="GO" id="GO:0003677">
    <property type="term" value="F:DNA binding"/>
    <property type="evidence" value="ECO:0007669"/>
    <property type="project" value="UniProtKB-KW"/>
</dbReference>
<dbReference type="GO" id="GO:0003676">
    <property type="term" value="F:nucleic acid binding"/>
    <property type="evidence" value="ECO:0000318"/>
    <property type="project" value="GO_Central"/>
</dbReference>
<dbReference type="GO" id="GO:0010468">
    <property type="term" value="P:regulation of gene expression"/>
    <property type="evidence" value="ECO:0000318"/>
    <property type="project" value="GO_Central"/>
</dbReference>
<dbReference type="GO" id="GO:0009409">
    <property type="term" value="P:response to cold"/>
    <property type="evidence" value="ECO:0000314"/>
    <property type="project" value="EcoliWiki"/>
</dbReference>
<dbReference type="CDD" id="cd04458">
    <property type="entry name" value="CSP_CDS"/>
    <property type="match status" value="1"/>
</dbReference>
<dbReference type="FunFam" id="2.40.50.140:FF:000006">
    <property type="entry name" value="Cold shock protein CspC"/>
    <property type="match status" value="1"/>
</dbReference>
<dbReference type="Gene3D" id="6.20.370.130">
    <property type="match status" value="1"/>
</dbReference>
<dbReference type="Gene3D" id="2.40.50.140">
    <property type="entry name" value="Nucleic acid-binding proteins"/>
    <property type="match status" value="1"/>
</dbReference>
<dbReference type="InterPro" id="IPR012156">
    <property type="entry name" value="Cold_shock_CspA"/>
</dbReference>
<dbReference type="InterPro" id="IPR050181">
    <property type="entry name" value="Cold_shock_domain"/>
</dbReference>
<dbReference type="InterPro" id="IPR011129">
    <property type="entry name" value="CSD"/>
</dbReference>
<dbReference type="InterPro" id="IPR019844">
    <property type="entry name" value="CSD_CS"/>
</dbReference>
<dbReference type="InterPro" id="IPR002059">
    <property type="entry name" value="CSP_DNA-bd"/>
</dbReference>
<dbReference type="InterPro" id="IPR012340">
    <property type="entry name" value="NA-bd_OB-fold"/>
</dbReference>
<dbReference type="NCBIfam" id="NF007378">
    <property type="entry name" value="PRK09890.1"/>
    <property type="match status" value="1"/>
</dbReference>
<dbReference type="NCBIfam" id="NF007679">
    <property type="entry name" value="PRK10354.1"/>
    <property type="match status" value="1"/>
</dbReference>
<dbReference type="PANTHER" id="PTHR11544">
    <property type="entry name" value="COLD SHOCK DOMAIN CONTAINING PROTEINS"/>
    <property type="match status" value="1"/>
</dbReference>
<dbReference type="Pfam" id="PF00313">
    <property type="entry name" value="CSD"/>
    <property type="match status" value="1"/>
</dbReference>
<dbReference type="PIRSF" id="PIRSF002599">
    <property type="entry name" value="Cold_shock_A"/>
    <property type="match status" value="1"/>
</dbReference>
<dbReference type="PRINTS" id="PR00050">
    <property type="entry name" value="COLDSHOCK"/>
</dbReference>
<dbReference type="SMART" id="SM00357">
    <property type="entry name" value="CSP"/>
    <property type="match status" value="1"/>
</dbReference>
<dbReference type="SUPFAM" id="SSF50249">
    <property type="entry name" value="Nucleic acid-binding proteins"/>
    <property type="match status" value="1"/>
</dbReference>
<dbReference type="PROSITE" id="PS00352">
    <property type="entry name" value="CSD_1"/>
    <property type="match status" value="1"/>
</dbReference>
<dbReference type="PROSITE" id="PS51857">
    <property type="entry name" value="CSD_2"/>
    <property type="match status" value="1"/>
</dbReference>
<proteinExistence type="evidence at protein level"/>
<keyword id="KW-0010">Activator</keyword>
<keyword id="KW-0963">Cytoplasm</keyword>
<keyword id="KW-0238">DNA-binding</keyword>
<keyword id="KW-1185">Reference proteome</keyword>
<keyword id="KW-0346">Stress response</keyword>
<keyword id="KW-0804">Transcription</keyword>
<keyword id="KW-0805">Transcription regulation</keyword>
<comment type="interaction">
    <interactant intactId="EBI-547581">
        <id>P0A978</id>
    </interactant>
    <interactant intactId="EBI-543771">
        <id>P0A7L0</id>
        <label>rplA</label>
    </interactant>
    <organismsDiffer>false</organismsDiffer>
    <experiments>3</experiments>
</comment>
<comment type="subcellular location">
    <subcellularLocation>
        <location evidence="1">Cytoplasm</location>
    </subcellularLocation>
</comment>
<comment type="induction">
    <text>In response to low temperature.</text>
</comment>
<organism>
    <name type="scientific">Escherichia coli (strain K12)</name>
    <dbReference type="NCBI Taxonomy" id="83333"/>
    <lineage>
        <taxon>Bacteria</taxon>
        <taxon>Pseudomonadati</taxon>
        <taxon>Pseudomonadota</taxon>
        <taxon>Gammaproteobacteria</taxon>
        <taxon>Enterobacterales</taxon>
        <taxon>Enterobacteriaceae</taxon>
        <taxon>Escherichia</taxon>
    </lineage>
</organism>
<name>CSPG_ECOLI</name>
<sequence length="70" mass="7781">MSNKMTGLVKWFNADKGFGFITPDDGSKDVFVHFTAIQSNEFRTLNENQKVEFSIEQGQRGPAAANVVTL</sequence>
<gene>
    <name type="primary">cspG</name>
    <name type="synonym">cspI</name>
    <name type="ordered locus">b0990</name>
    <name type="ordered locus">JW0974</name>
</gene>
<feature type="chain" id="PRO_0000100262" description="Cold shock-like protein CspG">
    <location>
        <begin position="1"/>
        <end position="70"/>
    </location>
</feature>
<feature type="domain" description="CSD">
    <location>
        <begin position="7"/>
        <end position="67"/>
    </location>
</feature>
<protein>
    <recommendedName>
        <fullName>Cold shock-like protein CspG</fullName>
        <shortName>CPS-G</shortName>
    </recommendedName>
</protein>
<reference key="1">
    <citation type="journal article" date="1996" name="J. Bacteriol.">
        <title>A novel member of the cspA family of genes that is induced by cold shock in Escherichia coli.</title>
        <authorList>
            <person name="Nakashima K."/>
            <person name="Kanamaru K."/>
            <person name="Mizuno T."/>
            <person name="Horikoshi K."/>
        </authorList>
    </citation>
    <scope>NUCLEOTIDE SEQUENCE [GENOMIC DNA]</scope>
    <source>
        <strain>K12</strain>
    </source>
</reference>
<reference key="2">
    <citation type="journal article" date="1997" name="J. Ind. Microbiol. Biotechnol.">
        <title>Detection and speciation of bacteria through PCR using universal major cold-shock protein primer oligomers.</title>
        <authorList>
            <person name="Francis K.P."/>
            <person name="Stewart G.S.A.B."/>
        </authorList>
    </citation>
    <scope>NUCLEOTIDE SEQUENCE [GENOMIC DNA]</scope>
    <source>
        <strain>K12 / W3110 / ATCC 27325 / DSM 5911</strain>
    </source>
</reference>
<reference key="3">
    <citation type="journal article" date="1996" name="DNA Res.">
        <title>A 718-kb DNA sequence of the Escherichia coli K-12 genome corresponding to the 12.7-28.0 min region on the linkage map.</title>
        <authorList>
            <person name="Oshima T."/>
            <person name="Aiba H."/>
            <person name="Baba T."/>
            <person name="Fujita K."/>
            <person name="Hayashi K."/>
            <person name="Honjo A."/>
            <person name="Ikemoto K."/>
            <person name="Inada T."/>
            <person name="Itoh T."/>
            <person name="Kajihara M."/>
            <person name="Kanai K."/>
            <person name="Kashimoto K."/>
            <person name="Kimura S."/>
            <person name="Kitagawa M."/>
            <person name="Makino K."/>
            <person name="Masuda S."/>
            <person name="Miki T."/>
            <person name="Mizobuchi K."/>
            <person name="Mori H."/>
            <person name="Motomura K."/>
            <person name="Nakamura Y."/>
            <person name="Nashimoto H."/>
            <person name="Nishio Y."/>
            <person name="Saito N."/>
            <person name="Sampei G."/>
            <person name="Seki Y."/>
            <person name="Tagami H."/>
            <person name="Takemoto K."/>
            <person name="Wada C."/>
            <person name="Yamamoto Y."/>
            <person name="Yano M."/>
            <person name="Horiuchi T."/>
        </authorList>
    </citation>
    <scope>NUCLEOTIDE SEQUENCE [LARGE SCALE GENOMIC DNA]</scope>
    <source>
        <strain>K12 / W3110 / ATCC 27325 / DSM 5911</strain>
    </source>
</reference>
<reference key="4">
    <citation type="journal article" date="1997" name="Science">
        <title>The complete genome sequence of Escherichia coli K-12.</title>
        <authorList>
            <person name="Blattner F.R."/>
            <person name="Plunkett G. III"/>
            <person name="Bloch C.A."/>
            <person name="Perna N.T."/>
            <person name="Burland V."/>
            <person name="Riley M."/>
            <person name="Collado-Vides J."/>
            <person name="Glasner J.D."/>
            <person name="Rode C.K."/>
            <person name="Mayhew G.F."/>
            <person name="Gregor J."/>
            <person name="Davis N.W."/>
            <person name="Kirkpatrick H.A."/>
            <person name="Goeden M.A."/>
            <person name="Rose D.J."/>
            <person name="Mau B."/>
            <person name="Shao Y."/>
        </authorList>
    </citation>
    <scope>NUCLEOTIDE SEQUENCE [LARGE SCALE GENOMIC DNA]</scope>
    <source>
        <strain>K12 / MG1655 / ATCC 47076</strain>
    </source>
</reference>
<reference key="5">
    <citation type="journal article" date="2006" name="Mol. Syst. Biol.">
        <title>Highly accurate genome sequences of Escherichia coli K-12 strains MG1655 and W3110.</title>
        <authorList>
            <person name="Hayashi K."/>
            <person name="Morooka N."/>
            <person name="Yamamoto Y."/>
            <person name="Fujita K."/>
            <person name="Isono K."/>
            <person name="Choi S."/>
            <person name="Ohtsubo E."/>
            <person name="Baba T."/>
            <person name="Wanner B.L."/>
            <person name="Mori H."/>
            <person name="Horiuchi T."/>
        </authorList>
    </citation>
    <scope>NUCLEOTIDE SEQUENCE [LARGE SCALE GENOMIC DNA]</scope>
    <source>
        <strain>K12 / W3110 / ATCC 27325 / DSM 5911</strain>
    </source>
</reference>